<geneLocation type="chloroplast"/>
<accession>Q9BBS6</accession>
<name>RR2_LOTJA</name>
<sequence length="236" mass="26983">MTKRYWNITFEEMMEAGVHFGHGTRKWNPKMAPYISMKRKGIHIINLTRTARFLSEACDLVFDAASRGKRFLIVGTKKKAADLVARAAIRARCHYVNKKWLGGMLTNWYTTETRLRKFRELRTEQKTGKLNCLPKRDAAILKRQLSHLETYLGGIKYMTGLPDIVIIVDQQEEYTALRECITLGIPTICLIDTNCDPDLADISIPANDDAIASIRLILNKLVFAICEGHSSYIRNF</sequence>
<evidence type="ECO:0000305" key="1"/>
<dbReference type="EMBL" id="AP002983">
    <property type="protein sequence ID" value="BAB33197.1"/>
    <property type="molecule type" value="Genomic_DNA"/>
</dbReference>
<dbReference type="RefSeq" id="NP_084799.1">
    <property type="nucleotide sequence ID" value="NC_002694.1"/>
</dbReference>
<dbReference type="SMR" id="Q9BBS6"/>
<dbReference type="GeneID" id="802927"/>
<dbReference type="GO" id="GO:0009507">
    <property type="term" value="C:chloroplast"/>
    <property type="evidence" value="ECO:0007669"/>
    <property type="project" value="UniProtKB-SubCell"/>
</dbReference>
<dbReference type="GO" id="GO:0005763">
    <property type="term" value="C:mitochondrial small ribosomal subunit"/>
    <property type="evidence" value="ECO:0007669"/>
    <property type="project" value="TreeGrafter"/>
</dbReference>
<dbReference type="GO" id="GO:0003735">
    <property type="term" value="F:structural constituent of ribosome"/>
    <property type="evidence" value="ECO:0007669"/>
    <property type="project" value="InterPro"/>
</dbReference>
<dbReference type="GO" id="GO:0006412">
    <property type="term" value="P:translation"/>
    <property type="evidence" value="ECO:0007669"/>
    <property type="project" value="UniProtKB-UniRule"/>
</dbReference>
<dbReference type="CDD" id="cd01425">
    <property type="entry name" value="RPS2"/>
    <property type="match status" value="1"/>
</dbReference>
<dbReference type="FunFam" id="3.40.50.10490:FF:000101">
    <property type="match status" value="1"/>
</dbReference>
<dbReference type="FunFam" id="1.10.287.610:FF:000001">
    <property type="entry name" value="30S ribosomal protein S2"/>
    <property type="match status" value="1"/>
</dbReference>
<dbReference type="Gene3D" id="3.40.50.10490">
    <property type="entry name" value="Glucose-6-phosphate isomerase like protein, domain 1"/>
    <property type="match status" value="1"/>
</dbReference>
<dbReference type="Gene3D" id="1.10.287.610">
    <property type="entry name" value="Helix hairpin bin"/>
    <property type="match status" value="1"/>
</dbReference>
<dbReference type="HAMAP" id="MF_00291_B">
    <property type="entry name" value="Ribosomal_uS2_B"/>
    <property type="match status" value="1"/>
</dbReference>
<dbReference type="InterPro" id="IPR001865">
    <property type="entry name" value="Ribosomal_uS2"/>
</dbReference>
<dbReference type="InterPro" id="IPR005706">
    <property type="entry name" value="Ribosomal_uS2_bac/mit/plastid"/>
</dbReference>
<dbReference type="InterPro" id="IPR018130">
    <property type="entry name" value="Ribosomal_uS2_CS"/>
</dbReference>
<dbReference type="InterPro" id="IPR023591">
    <property type="entry name" value="Ribosomal_uS2_flav_dom_sf"/>
</dbReference>
<dbReference type="NCBIfam" id="TIGR01011">
    <property type="entry name" value="rpsB_bact"/>
    <property type="match status" value="1"/>
</dbReference>
<dbReference type="PANTHER" id="PTHR12534">
    <property type="entry name" value="30S RIBOSOMAL PROTEIN S2 PROKARYOTIC AND ORGANELLAR"/>
    <property type="match status" value="1"/>
</dbReference>
<dbReference type="PANTHER" id="PTHR12534:SF0">
    <property type="entry name" value="SMALL RIBOSOMAL SUBUNIT PROTEIN US2M"/>
    <property type="match status" value="1"/>
</dbReference>
<dbReference type="Pfam" id="PF00318">
    <property type="entry name" value="Ribosomal_S2"/>
    <property type="match status" value="1"/>
</dbReference>
<dbReference type="PRINTS" id="PR00395">
    <property type="entry name" value="RIBOSOMALS2"/>
</dbReference>
<dbReference type="SUPFAM" id="SSF52313">
    <property type="entry name" value="Ribosomal protein S2"/>
    <property type="match status" value="1"/>
</dbReference>
<dbReference type="PROSITE" id="PS00962">
    <property type="entry name" value="RIBOSOMAL_S2_1"/>
    <property type="match status" value="1"/>
</dbReference>
<dbReference type="PROSITE" id="PS00963">
    <property type="entry name" value="RIBOSOMAL_S2_2"/>
    <property type="match status" value="1"/>
</dbReference>
<proteinExistence type="inferred from homology"/>
<keyword id="KW-0150">Chloroplast</keyword>
<keyword id="KW-0934">Plastid</keyword>
<keyword id="KW-0687">Ribonucleoprotein</keyword>
<keyword id="KW-0689">Ribosomal protein</keyword>
<comment type="subcellular location">
    <subcellularLocation>
        <location>Plastid</location>
        <location>Chloroplast</location>
    </subcellularLocation>
</comment>
<comment type="similarity">
    <text evidence="1">Belongs to the universal ribosomal protein uS2 family.</text>
</comment>
<feature type="chain" id="PRO_0000134299" description="Small ribosomal subunit protein uS2c">
    <location>
        <begin position="1"/>
        <end position="236"/>
    </location>
</feature>
<organism>
    <name type="scientific">Lotus japonicus</name>
    <name type="common">Lotus corniculatus var. japonicus</name>
    <dbReference type="NCBI Taxonomy" id="34305"/>
    <lineage>
        <taxon>Eukaryota</taxon>
        <taxon>Viridiplantae</taxon>
        <taxon>Streptophyta</taxon>
        <taxon>Embryophyta</taxon>
        <taxon>Tracheophyta</taxon>
        <taxon>Spermatophyta</taxon>
        <taxon>Magnoliopsida</taxon>
        <taxon>eudicotyledons</taxon>
        <taxon>Gunneridae</taxon>
        <taxon>Pentapetalae</taxon>
        <taxon>rosids</taxon>
        <taxon>fabids</taxon>
        <taxon>Fabales</taxon>
        <taxon>Fabaceae</taxon>
        <taxon>Papilionoideae</taxon>
        <taxon>50 kb inversion clade</taxon>
        <taxon>NPAAA clade</taxon>
        <taxon>Hologalegina</taxon>
        <taxon>robinioid clade</taxon>
        <taxon>Loteae</taxon>
        <taxon>Lotus</taxon>
    </lineage>
</organism>
<reference key="1">
    <citation type="journal article" date="2000" name="DNA Res.">
        <title>Complete structure of the chloroplast genome of a legume, Lotus japonicus.</title>
        <authorList>
            <person name="Kato T."/>
            <person name="Kaneko T."/>
            <person name="Sato S."/>
            <person name="Nakamura Y."/>
            <person name="Tabata S."/>
        </authorList>
    </citation>
    <scope>NUCLEOTIDE SEQUENCE [LARGE SCALE GENOMIC DNA]</scope>
    <source>
        <strain>cv. Miyakojima MG-20</strain>
    </source>
</reference>
<protein>
    <recommendedName>
        <fullName evidence="1">Small ribosomal subunit protein uS2c</fullName>
    </recommendedName>
    <alternativeName>
        <fullName>30S ribosomal protein S2, chloroplastic</fullName>
    </alternativeName>
</protein>
<gene>
    <name type="primary">rps2</name>
</gene>